<comment type="function">
    <text evidence="1">Induces local and distal defense responses (incompatible hypersensitive reaction) in plants from the solanaceae and cruciferae families. Elicits leaf necrosis and causes the accumulation of pathogenesis-related proteins. Might interact with the lipidic molecules of the plasma membrane (By similarity).</text>
</comment>
<comment type="subcellular location">
    <subcellularLocation>
        <location>Secreted</location>
    </subcellularLocation>
</comment>
<comment type="similarity">
    <text evidence="2">Belongs to the elicitin family.</text>
</comment>
<evidence type="ECO:0000250" key="1"/>
<evidence type="ECO:0000305" key="2"/>
<reference key="1">
    <citation type="journal article" date="1995" name="Mol. Plant Microbe Interact.">
        <title>The relationships between the toxicity and the primary and secondary structures of elicitin-like protein elicitors secreted by the phytopathogenic fungus Pythium vexans.</title>
        <authorList>
            <person name="Huet J.-C."/>
            <person name="Le Caer J.-P."/>
            <person name="Nespoulous C."/>
            <person name="Pernollet J.-C."/>
        </authorList>
    </citation>
    <scope>PROTEIN SEQUENCE</scope>
</reference>
<protein>
    <recommendedName>
        <fullName>Elicitin Vex2</fullName>
    </recommendedName>
</protein>
<name>ELI2_PHYVE</name>
<dbReference type="SMR" id="P0C232"/>
<dbReference type="VEuPathDB" id="FungiDB:PVE_G002006"/>
<dbReference type="GO" id="GO:0005576">
    <property type="term" value="C:extracellular region"/>
    <property type="evidence" value="ECO:0007669"/>
    <property type="project" value="UniProtKB-SubCell"/>
</dbReference>
<dbReference type="GO" id="GO:0052040">
    <property type="term" value="P:symbiont-mediated perturbation of host programmed cell death"/>
    <property type="evidence" value="ECO:0007669"/>
    <property type="project" value="UniProtKB-KW"/>
</dbReference>
<dbReference type="Gene3D" id="1.10.239.10">
    <property type="entry name" value="Elicitin domain"/>
    <property type="match status" value="1"/>
</dbReference>
<dbReference type="InterPro" id="IPR002200">
    <property type="entry name" value="Elicitin"/>
</dbReference>
<dbReference type="InterPro" id="IPR036470">
    <property type="entry name" value="Elicitin_sf"/>
</dbReference>
<dbReference type="Pfam" id="PF00964">
    <property type="entry name" value="Elicitin"/>
    <property type="match status" value="1"/>
</dbReference>
<dbReference type="PRINTS" id="PR00948">
    <property type="entry name" value="ELICITIN"/>
</dbReference>
<dbReference type="SMART" id="SM01187">
    <property type="entry name" value="Elicitin"/>
    <property type="match status" value="1"/>
</dbReference>
<dbReference type="SUPFAM" id="SSF48647">
    <property type="entry name" value="Fungal elicitin"/>
    <property type="match status" value="1"/>
</dbReference>
<organism>
    <name type="scientific">Phytopythium vexans</name>
    <name type="common">Damping-off fungus</name>
    <name type="synonym">Pythium vexans</name>
    <dbReference type="NCBI Taxonomy" id="907947"/>
    <lineage>
        <taxon>Eukaryota</taxon>
        <taxon>Sar</taxon>
        <taxon>Stramenopiles</taxon>
        <taxon>Oomycota</taxon>
        <taxon>Pythiales</taxon>
        <taxon>Pythiaceae</taxon>
        <taxon>Phytopythium</taxon>
    </lineage>
</organism>
<keyword id="KW-0903">Direct protein sequencing</keyword>
<keyword id="KW-1015">Disulfide bond</keyword>
<keyword id="KW-0928">Hypersensitive response elicitation</keyword>
<keyword id="KW-0964">Secreted</keyword>
<accession>P0C232</accession>
<feature type="chain" id="PRO_0000260285" description="Elicitin Vex2">
    <location>
        <begin position="1"/>
        <end position="100"/>
    </location>
</feature>
<feature type="disulfide bond" evidence="1">
    <location>
        <begin position="3"/>
        <end position="71"/>
    </location>
</feature>
<feature type="disulfide bond" evidence="1">
    <location>
        <begin position="27"/>
        <end position="56"/>
    </location>
</feature>
<feature type="disulfide bond" evidence="1">
    <location>
        <begin position="51"/>
        <end position="95"/>
    </location>
</feature>
<proteinExistence type="evidence at protein level"/>
<sequence>TACTTTQQTAAFVALVSVLSTDNFNQCSTDSGYSMLTATALPTTEQYTKMCASTACQGMIQTIIAANAPDCELTVPTSGLVLNVYEYANGFSAKCSSLSS</sequence>